<dbReference type="EC" id="4.2.1.59" evidence="1"/>
<dbReference type="EMBL" id="CP000725">
    <property type="protein sequence ID" value="ABV09274.1"/>
    <property type="molecule type" value="Genomic_DNA"/>
</dbReference>
<dbReference type="RefSeq" id="WP_008809611.1">
    <property type="nucleotide sequence ID" value="NC_009785.1"/>
</dbReference>
<dbReference type="SMR" id="A8AYV7"/>
<dbReference type="STRING" id="467705.SGO_1690"/>
<dbReference type="GeneID" id="93787968"/>
<dbReference type="KEGG" id="sgo:SGO_1690"/>
<dbReference type="eggNOG" id="COG0764">
    <property type="taxonomic scope" value="Bacteria"/>
</dbReference>
<dbReference type="HOGENOM" id="CLU_078912_1_2_9"/>
<dbReference type="Proteomes" id="UP000001131">
    <property type="component" value="Chromosome"/>
</dbReference>
<dbReference type="GO" id="GO:0005737">
    <property type="term" value="C:cytoplasm"/>
    <property type="evidence" value="ECO:0007669"/>
    <property type="project" value="UniProtKB-SubCell"/>
</dbReference>
<dbReference type="GO" id="GO:0016020">
    <property type="term" value="C:membrane"/>
    <property type="evidence" value="ECO:0007669"/>
    <property type="project" value="GOC"/>
</dbReference>
<dbReference type="GO" id="GO:0019171">
    <property type="term" value="F:(3R)-hydroxyacyl-[acyl-carrier-protein] dehydratase activity"/>
    <property type="evidence" value="ECO:0007669"/>
    <property type="project" value="UniProtKB-EC"/>
</dbReference>
<dbReference type="GO" id="GO:0006633">
    <property type="term" value="P:fatty acid biosynthetic process"/>
    <property type="evidence" value="ECO:0007669"/>
    <property type="project" value="UniProtKB-UniRule"/>
</dbReference>
<dbReference type="GO" id="GO:0009245">
    <property type="term" value="P:lipid A biosynthetic process"/>
    <property type="evidence" value="ECO:0007669"/>
    <property type="project" value="UniProtKB-UniRule"/>
</dbReference>
<dbReference type="CDD" id="cd01288">
    <property type="entry name" value="FabZ"/>
    <property type="match status" value="1"/>
</dbReference>
<dbReference type="FunFam" id="3.10.129.10:FF:000001">
    <property type="entry name" value="3-hydroxyacyl-[acyl-carrier-protein] dehydratase FabZ"/>
    <property type="match status" value="1"/>
</dbReference>
<dbReference type="Gene3D" id="3.10.129.10">
    <property type="entry name" value="Hotdog Thioesterase"/>
    <property type="match status" value="1"/>
</dbReference>
<dbReference type="HAMAP" id="MF_00406">
    <property type="entry name" value="FabZ"/>
    <property type="match status" value="1"/>
</dbReference>
<dbReference type="InterPro" id="IPR013114">
    <property type="entry name" value="FabA_FabZ"/>
</dbReference>
<dbReference type="InterPro" id="IPR010084">
    <property type="entry name" value="FabZ"/>
</dbReference>
<dbReference type="InterPro" id="IPR029069">
    <property type="entry name" value="HotDog_dom_sf"/>
</dbReference>
<dbReference type="NCBIfam" id="TIGR01750">
    <property type="entry name" value="fabZ"/>
    <property type="match status" value="1"/>
</dbReference>
<dbReference type="NCBIfam" id="NF000582">
    <property type="entry name" value="PRK00006.1"/>
    <property type="match status" value="1"/>
</dbReference>
<dbReference type="PANTHER" id="PTHR30272">
    <property type="entry name" value="3-HYDROXYACYL-[ACYL-CARRIER-PROTEIN] DEHYDRATASE"/>
    <property type="match status" value="1"/>
</dbReference>
<dbReference type="PANTHER" id="PTHR30272:SF1">
    <property type="entry name" value="3-HYDROXYACYL-[ACYL-CARRIER-PROTEIN] DEHYDRATASE"/>
    <property type="match status" value="1"/>
</dbReference>
<dbReference type="Pfam" id="PF07977">
    <property type="entry name" value="FabA"/>
    <property type="match status" value="1"/>
</dbReference>
<dbReference type="SUPFAM" id="SSF54637">
    <property type="entry name" value="Thioesterase/thiol ester dehydrase-isomerase"/>
    <property type="match status" value="1"/>
</dbReference>
<name>FABZ_STRGC</name>
<reference key="1">
    <citation type="journal article" date="2007" name="J. Bacteriol.">
        <title>Genome-wide transcriptional changes in Streptococcus gordonii in response to competence signaling peptide.</title>
        <authorList>
            <person name="Vickerman M.M."/>
            <person name="Iobst S."/>
            <person name="Jesionowski A.M."/>
            <person name="Gill S.R."/>
        </authorList>
    </citation>
    <scope>NUCLEOTIDE SEQUENCE [LARGE SCALE GENOMIC DNA]</scope>
    <source>
        <strain>Challis / ATCC 35105 / BCRC 15272 / CH1 / DL1 / V288</strain>
    </source>
</reference>
<sequence length="140" mass="15401">MIDINAIKEALPHRYPMLLVDRVLEVSEDEIVALKNVTINEPFFNGHFPQYPVMPGVLIMEALAQTAGVLELSKEENKGKLVFYAGMDKVKFKKQVVPGDQLIMTAKFVKRRGTIAVVEAKAEVDGKLAASGTLTFAIGQ</sequence>
<accession>A8AYV7</accession>
<proteinExistence type="inferred from homology"/>
<feature type="chain" id="PRO_1000080456" description="3-hydroxyacyl-[acyl-carrier-protein] dehydratase FabZ">
    <location>
        <begin position="1"/>
        <end position="140"/>
    </location>
</feature>
<feature type="active site" evidence="1">
    <location>
        <position position="47"/>
    </location>
</feature>
<organism>
    <name type="scientific">Streptococcus gordonii (strain Challis / ATCC 35105 / BCRC 15272 / CH1 / DL1 / V288)</name>
    <dbReference type="NCBI Taxonomy" id="467705"/>
    <lineage>
        <taxon>Bacteria</taxon>
        <taxon>Bacillati</taxon>
        <taxon>Bacillota</taxon>
        <taxon>Bacilli</taxon>
        <taxon>Lactobacillales</taxon>
        <taxon>Streptococcaceae</taxon>
        <taxon>Streptococcus</taxon>
    </lineage>
</organism>
<gene>
    <name evidence="1" type="primary">fabZ</name>
    <name type="ordered locus">SGO_1690</name>
</gene>
<evidence type="ECO:0000255" key="1">
    <source>
        <dbReference type="HAMAP-Rule" id="MF_00406"/>
    </source>
</evidence>
<protein>
    <recommendedName>
        <fullName evidence="1">3-hydroxyacyl-[acyl-carrier-protein] dehydratase FabZ</fullName>
        <ecNumber evidence="1">4.2.1.59</ecNumber>
    </recommendedName>
    <alternativeName>
        <fullName evidence="1">(3R)-hydroxymyristoyl-[acyl-carrier-protein] dehydratase</fullName>
        <shortName evidence="1">(3R)-hydroxymyristoyl-ACP dehydrase</shortName>
    </alternativeName>
    <alternativeName>
        <fullName evidence="1">Beta-hydroxyacyl-ACP dehydratase</fullName>
    </alternativeName>
</protein>
<comment type="function">
    <text evidence="1">Involved in unsaturated fatty acids biosynthesis. Catalyzes the dehydration of short chain beta-hydroxyacyl-ACPs and long chain saturated and unsaturated beta-hydroxyacyl-ACPs.</text>
</comment>
<comment type="catalytic activity">
    <reaction evidence="1">
        <text>a (3R)-hydroxyacyl-[ACP] = a (2E)-enoyl-[ACP] + H2O</text>
        <dbReference type="Rhea" id="RHEA:13097"/>
        <dbReference type="Rhea" id="RHEA-COMP:9925"/>
        <dbReference type="Rhea" id="RHEA-COMP:9945"/>
        <dbReference type="ChEBI" id="CHEBI:15377"/>
        <dbReference type="ChEBI" id="CHEBI:78784"/>
        <dbReference type="ChEBI" id="CHEBI:78827"/>
        <dbReference type="EC" id="4.2.1.59"/>
    </reaction>
</comment>
<comment type="subcellular location">
    <subcellularLocation>
        <location evidence="1">Cytoplasm</location>
    </subcellularLocation>
</comment>
<comment type="similarity">
    <text evidence="1">Belongs to the thioester dehydratase family. FabZ subfamily.</text>
</comment>
<keyword id="KW-0963">Cytoplasm</keyword>
<keyword id="KW-0441">Lipid A biosynthesis</keyword>
<keyword id="KW-0444">Lipid biosynthesis</keyword>
<keyword id="KW-0443">Lipid metabolism</keyword>
<keyword id="KW-0456">Lyase</keyword>
<keyword id="KW-1185">Reference proteome</keyword>